<organism>
    <name type="scientific">Pyropia haitanensis</name>
    <name type="common">Red seaweed</name>
    <name type="synonym">Porphyra haitanensis</name>
    <dbReference type="NCBI Taxonomy" id="1262161"/>
    <lineage>
        <taxon>Eukaryota</taxon>
        <taxon>Rhodophyta</taxon>
        <taxon>Bangiophyceae</taxon>
        <taxon>Bangiales</taxon>
        <taxon>Bangiaceae</taxon>
        <taxon>Pyropia</taxon>
    </lineage>
</organism>
<reference key="1">
    <citation type="submission" date="2003-08" db="EMBL/GenBank/DDBJ databases">
        <title>Cloning and sequence analysis of allophycocyanin gene of Porphyra haitanensis.</title>
        <authorList>
            <person name="Zuo Z.-H."/>
            <person name="Deng Y.-G."/>
            <person name="Chen Y.-X."/>
        </authorList>
    </citation>
    <scope>NUCLEOTIDE SEQUENCE [GENOMIC DNA]</scope>
</reference>
<sequence length="161" mass="17479">MSIVTKSIVNADAEARYLSPGELDRIKSFVLSGQRRLRIAQILTDNRERIVKQGGQQLFQKRPDVVSPGGNAYGEEMTATCLRDLDYYLRLVTYGIVAGDVTPIEEIGLVGVKEMYNSLGTPISGVAVGVKCMKSVACSLLAGEDSAEAGFYFDYTLGAMQ</sequence>
<geneLocation type="chloroplast"/>
<accession>Q6UDP9</accession>
<dbReference type="EMBL" id="AY372218">
    <property type="protein sequence ID" value="AAQ73314.1"/>
    <property type="molecule type" value="Genomic_DNA"/>
</dbReference>
<dbReference type="SMR" id="Q6UDP9"/>
<dbReference type="GO" id="GO:0009535">
    <property type="term" value="C:chloroplast thylakoid membrane"/>
    <property type="evidence" value="ECO:0007669"/>
    <property type="project" value="UniProtKB-SubCell"/>
</dbReference>
<dbReference type="GO" id="GO:0030089">
    <property type="term" value="C:phycobilisome"/>
    <property type="evidence" value="ECO:0007669"/>
    <property type="project" value="UniProtKB-KW"/>
</dbReference>
<dbReference type="GO" id="GO:0015979">
    <property type="term" value="P:photosynthesis"/>
    <property type="evidence" value="ECO:0007669"/>
    <property type="project" value="UniProtKB-KW"/>
</dbReference>
<dbReference type="CDD" id="cd12125">
    <property type="entry name" value="APC_alpha"/>
    <property type="match status" value="1"/>
</dbReference>
<dbReference type="Gene3D" id="1.10.490.20">
    <property type="entry name" value="Phycocyanins"/>
    <property type="match status" value="1"/>
</dbReference>
<dbReference type="InterPro" id="IPR009050">
    <property type="entry name" value="Globin-like_sf"/>
</dbReference>
<dbReference type="InterPro" id="IPR012128">
    <property type="entry name" value="Phycobilisome_asu/bsu"/>
</dbReference>
<dbReference type="InterPro" id="IPR038719">
    <property type="entry name" value="Phycobilisome_asu/bsu_sf"/>
</dbReference>
<dbReference type="PANTHER" id="PTHR34011:SF2">
    <property type="entry name" value="ALLOPHYCOCYANIN ALPHA CHAIN"/>
    <property type="match status" value="1"/>
</dbReference>
<dbReference type="PANTHER" id="PTHR34011">
    <property type="entry name" value="PHYCOBILISOME 32.1 KDA LINKER POLYPEPTIDE, PHYCOCYANIN-ASSOCIATED, ROD 2-RELATED"/>
    <property type="match status" value="1"/>
</dbReference>
<dbReference type="Pfam" id="PF00502">
    <property type="entry name" value="Phycobilisome"/>
    <property type="match status" value="1"/>
</dbReference>
<dbReference type="PIRSF" id="PIRSF000081">
    <property type="entry name" value="Phycocyanin"/>
    <property type="match status" value="1"/>
</dbReference>
<dbReference type="SUPFAM" id="SSF46458">
    <property type="entry name" value="Globin-like"/>
    <property type="match status" value="1"/>
</dbReference>
<proteinExistence type="inferred from homology"/>
<protein>
    <recommendedName>
        <fullName>Allophycocyanin alpha chain</fullName>
    </recommendedName>
</protein>
<keyword id="KW-0042">Antenna complex</keyword>
<keyword id="KW-0089">Bile pigment</keyword>
<keyword id="KW-0150">Chloroplast</keyword>
<keyword id="KW-0157">Chromophore</keyword>
<keyword id="KW-0249">Electron transport</keyword>
<keyword id="KW-0472">Membrane</keyword>
<keyword id="KW-0488">Methylation</keyword>
<keyword id="KW-0602">Photosynthesis</keyword>
<keyword id="KW-0605">Phycobilisome</keyword>
<keyword id="KW-0934">Plastid</keyword>
<keyword id="KW-0793">Thylakoid</keyword>
<keyword id="KW-0813">Transport</keyword>
<name>PHAA_PYRHA</name>
<feature type="initiator methionine" description="Removed" evidence="1">
    <location>
        <position position="1"/>
    </location>
</feature>
<feature type="chain" id="PRO_0000277329" description="Allophycocyanin alpha chain">
    <location>
        <begin position="2"/>
        <end position="161"/>
    </location>
</feature>
<feature type="binding site" description="covalent" evidence="1">
    <location>
        <position position="81"/>
    </location>
    <ligand>
        <name>(2R,3E)-phycocyanobilin</name>
        <dbReference type="ChEBI" id="CHEBI:85275"/>
    </ligand>
</feature>
<feature type="modified residue" description="N4-methylasparagine" evidence="1">
    <location>
        <position position="71"/>
    </location>
</feature>
<gene>
    <name type="primary">apcA</name>
</gene>
<evidence type="ECO:0000250" key="1"/>
<evidence type="ECO:0000305" key="2"/>
<comment type="function">
    <text evidence="1">Light-harvesting photosynthetic bile pigment-protein from the phycobiliprotein complex. Allophycocyanin has a maximum absorption at approximately 650 nanometers (By similarity).</text>
</comment>
<comment type="subunit">
    <text evidence="1">Heterodimer of an alpha and a beta chain.</text>
</comment>
<comment type="subcellular location">
    <subcellularLocation>
        <location evidence="1">Plastid</location>
        <location evidence="1">Chloroplast thylakoid membrane</location>
        <topology evidence="1">Peripheral membrane protein</topology>
        <orientation evidence="1">Stromal side</orientation>
    </subcellularLocation>
    <text evidence="1">Forms the core of the phycobilisome.</text>
</comment>
<comment type="PTM">
    <text evidence="1">Contains one covalently linked phycocyanobilin chromophore.</text>
</comment>
<comment type="similarity">
    <text evidence="2">Belongs to the phycobiliprotein family.</text>
</comment>